<accession>Q9RFQ2</accession>
<accession>C4XE30</accession>
<evidence type="ECO:0000255" key="1">
    <source>
        <dbReference type="HAMAP-Rule" id="MF_00004"/>
    </source>
</evidence>
<evidence type="ECO:0000305" key="2"/>
<keyword id="KW-0963">Cytoplasm</keyword>
<keyword id="KW-0328">Glycosyltransferase</keyword>
<keyword id="KW-0660">Purine salvage</keyword>
<keyword id="KW-1185">Reference proteome</keyword>
<keyword id="KW-0808">Transferase</keyword>
<feature type="chain" id="PRO_0000149409" description="Adenine phosphoribosyltransferase">
    <location>
        <begin position="1"/>
        <end position="171"/>
    </location>
</feature>
<sequence>MDLKKYIRDIENFPKTGIMFKDISPLLANGKALNYTITEMAKLAQDVDVIVGPDARGFLFGTPTAAFLKKPFIMVRKPGKLPGDVISKSYDLEYGNNVLQIQKGFIKKGQTVAIIDDVLATGGTTKAIIKLLEEQGAIVKKVILLLELVDLNGRQLITKDNDIEIVSLVKF</sequence>
<gene>
    <name evidence="1" type="primary">apt</name>
    <name type="ordered locus">MBIO_0137</name>
</gene>
<proteinExistence type="inferred from homology"/>
<comment type="function">
    <text evidence="1">Catalyzes a salvage reaction resulting in the formation of AMP, that is energically less costly than de novo synthesis.</text>
</comment>
<comment type="catalytic activity">
    <reaction evidence="1">
        <text>AMP + diphosphate = 5-phospho-alpha-D-ribose 1-diphosphate + adenine</text>
        <dbReference type="Rhea" id="RHEA:16609"/>
        <dbReference type="ChEBI" id="CHEBI:16708"/>
        <dbReference type="ChEBI" id="CHEBI:33019"/>
        <dbReference type="ChEBI" id="CHEBI:58017"/>
        <dbReference type="ChEBI" id="CHEBI:456215"/>
        <dbReference type="EC" id="2.4.2.7"/>
    </reaction>
</comment>
<comment type="pathway">
    <text evidence="1">Purine metabolism; AMP biosynthesis via salvage pathway; AMP from adenine: step 1/1.</text>
</comment>
<comment type="subunit">
    <text evidence="1">Homodimer.</text>
</comment>
<comment type="subcellular location">
    <subcellularLocation>
        <location evidence="1">Cytoplasm</location>
    </subcellularLocation>
</comment>
<comment type="similarity">
    <text evidence="1">Belongs to the purine/pyrimidine phosphoribosyltransferase family.</text>
</comment>
<comment type="sequence caution" evidence="2">
    <conflict type="erroneous initiation">
        <sequence resource="EMBL-CDS" id="BAH69402"/>
    </conflict>
    <text>Extended N-terminus.</text>
</comment>
<name>APT_MYCFP</name>
<reference key="1">
    <citation type="journal article" date="1999" name="J. Bacteriol.">
        <title>IS1630 of Mycoplasma fermentans, a novel IS30-type insertion element that targets and duplicates inverted repeats of variable length and sequence during insertion.</title>
        <authorList>
            <person name="Calcutt M.J."/>
            <person name="Lavrrar J.L."/>
            <person name="Wise K.S."/>
        </authorList>
    </citation>
    <scope>NUCLEOTIDE SEQUENCE [GENOMIC DNA]</scope>
    <source>
        <strain>ATCC 19989 / NBRC 14854 / NCTC 10117 / PG18</strain>
    </source>
</reference>
<reference key="2">
    <citation type="journal article" date="2009" name="Curr. Microbiol.">
        <title>Molecular cloning and expression of a novel cholinephosphotransferase involved in glycoglycerophospholipid biosynthesis of Mycoplasma fermentans.</title>
        <authorList>
            <person name="Ishida N."/>
            <person name="Irikura D."/>
            <person name="Matsuda K."/>
            <person name="Sato S."/>
            <person name="Sone T."/>
            <person name="Tanaka M."/>
            <person name="Asano K."/>
        </authorList>
    </citation>
    <scope>NUCLEOTIDE SEQUENCE [LARGE SCALE GENOMIC DNA]</scope>
    <source>
        <strain>ATCC 19989 / NBRC 14854 / NCTC 10117 / PG18</strain>
    </source>
</reference>
<organism>
    <name type="scientific">Mycoplasmopsis fermentans (strain ATCC 19989 / NBRC 14854 / NCTC 10117 / PG18)</name>
    <name type="common">Mycoplasma fermentans</name>
    <dbReference type="NCBI Taxonomy" id="496833"/>
    <lineage>
        <taxon>Bacteria</taxon>
        <taxon>Bacillati</taxon>
        <taxon>Mycoplasmatota</taxon>
        <taxon>Mycoplasmoidales</taxon>
        <taxon>Metamycoplasmataceae</taxon>
        <taxon>Mycoplasmopsis</taxon>
    </lineage>
</organism>
<dbReference type="EC" id="2.4.2.7" evidence="1"/>
<dbReference type="EMBL" id="AF179373">
    <property type="protein sequence ID" value="AAF15560.1"/>
    <property type="molecule type" value="Genomic_DNA"/>
</dbReference>
<dbReference type="EMBL" id="AP009608">
    <property type="protein sequence ID" value="BAH69402.1"/>
    <property type="status" value="ALT_INIT"/>
    <property type="molecule type" value="Genomic_DNA"/>
</dbReference>
<dbReference type="RefSeq" id="WP_013526633.1">
    <property type="nucleotide sequence ID" value="NC_021002.1"/>
</dbReference>
<dbReference type="SMR" id="Q9RFQ2"/>
<dbReference type="KEGG" id="mfp:MBIO_0137"/>
<dbReference type="PATRIC" id="fig|496833.3.peg.558"/>
<dbReference type="eggNOG" id="COG0503">
    <property type="taxonomic scope" value="Bacteria"/>
</dbReference>
<dbReference type="HOGENOM" id="CLU_063339_3_0_14"/>
<dbReference type="UniPathway" id="UPA00588">
    <property type="reaction ID" value="UER00646"/>
</dbReference>
<dbReference type="Proteomes" id="UP000006810">
    <property type="component" value="Chromosome"/>
</dbReference>
<dbReference type="GO" id="GO:0005737">
    <property type="term" value="C:cytoplasm"/>
    <property type="evidence" value="ECO:0007669"/>
    <property type="project" value="UniProtKB-SubCell"/>
</dbReference>
<dbReference type="GO" id="GO:0002055">
    <property type="term" value="F:adenine binding"/>
    <property type="evidence" value="ECO:0007669"/>
    <property type="project" value="TreeGrafter"/>
</dbReference>
<dbReference type="GO" id="GO:0003999">
    <property type="term" value="F:adenine phosphoribosyltransferase activity"/>
    <property type="evidence" value="ECO:0007669"/>
    <property type="project" value="UniProtKB-UniRule"/>
</dbReference>
<dbReference type="GO" id="GO:0016208">
    <property type="term" value="F:AMP binding"/>
    <property type="evidence" value="ECO:0007669"/>
    <property type="project" value="TreeGrafter"/>
</dbReference>
<dbReference type="GO" id="GO:0006168">
    <property type="term" value="P:adenine salvage"/>
    <property type="evidence" value="ECO:0007669"/>
    <property type="project" value="InterPro"/>
</dbReference>
<dbReference type="GO" id="GO:0044209">
    <property type="term" value="P:AMP salvage"/>
    <property type="evidence" value="ECO:0007669"/>
    <property type="project" value="UniProtKB-UniRule"/>
</dbReference>
<dbReference type="GO" id="GO:0006166">
    <property type="term" value="P:purine ribonucleoside salvage"/>
    <property type="evidence" value="ECO:0007669"/>
    <property type="project" value="UniProtKB-KW"/>
</dbReference>
<dbReference type="CDD" id="cd06223">
    <property type="entry name" value="PRTases_typeI"/>
    <property type="match status" value="1"/>
</dbReference>
<dbReference type="FunFam" id="3.40.50.2020:FF:000004">
    <property type="entry name" value="Adenine phosphoribosyltransferase"/>
    <property type="match status" value="1"/>
</dbReference>
<dbReference type="Gene3D" id="3.40.50.2020">
    <property type="match status" value="1"/>
</dbReference>
<dbReference type="HAMAP" id="MF_00004">
    <property type="entry name" value="Aden_phosphoribosyltr"/>
    <property type="match status" value="1"/>
</dbReference>
<dbReference type="InterPro" id="IPR005764">
    <property type="entry name" value="Ade_phspho_trans"/>
</dbReference>
<dbReference type="InterPro" id="IPR000836">
    <property type="entry name" value="PRibTrfase_dom"/>
</dbReference>
<dbReference type="InterPro" id="IPR029057">
    <property type="entry name" value="PRTase-like"/>
</dbReference>
<dbReference type="InterPro" id="IPR050054">
    <property type="entry name" value="UPRTase/APRTase"/>
</dbReference>
<dbReference type="NCBIfam" id="TIGR01090">
    <property type="entry name" value="apt"/>
    <property type="match status" value="1"/>
</dbReference>
<dbReference type="NCBIfam" id="NF002636">
    <property type="entry name" value="PRK02304.1-5"/>
    <property type="match status" value="1"/>
</dbReference>
<dbReference type="PANTHER" id="PTHR32315">
    <property type="entry name" value="ADENINE PHOSPHORIBOSYLTRANSFERASE"/>
    <property type="match status" value="1"/>
</dbReference>
<dbReference type="PANTHER" id="PTHR32315:SF3">
    <property type="entry name" value="ADENINE PHOSPHORIBOSYLTRANSFERASE"/>
    <property type="match status" value="1"/>
</dbReference>
<dbReference type="Pfam" id="PF00156">
    <property type="entry name" value="Pribosyltran"/>
    <property type="match status" value="1"/>
</dbReference>
<dbReference type="SUPFAM" id="SSF53271">
    <property type="entry name" value="PRTase-like"/>
    <property type="match status" value="1"/>
</dbReference>
<protein>
    <recommendedName>
        <fullName evidence="1">Adenine phosphoribosyltransferase</fullName>
        <shortName evidence="1">APRT</shortName>
        <ecNumber evidence="1">2.4.2.7</ecNumber>
    </recommendedName>
</protein>